<protein>
    <recommendedName>
        <fullName>Alkaline proteinase inhibitor</fullName>
    </recommendedName>
    <alternativeName>
        <fullName>PrtA-specific inhibitor</fullName>
    </alternativeName>
</protein>
<sequence length="134" mass="14795">MVFAAWYLKFAFFVALAFSIIGGSMASSLVLPHASELKGVWQLSDKHQQCDVSLTDQPLPEGSIWSLNGDNDCLAYMFGEVPAGWRPTPDGLTITDEQGSGLAFFANEPDGWFARFADGRELMMKPNKTNKKNE</sequence>
<comment type="function">
    <text evidence="1">Inhibitor of the alkaline protease.</text>
</comment>
<comment type="subcellular location">
    <subcellularLocation>
        <location evidence="1">Periplasm</location>
    </subcellularLocation>
</comment>
<comment type="similarity">
    <text evidence="3">Belongs to the protease inhibitor I38 family.</text>
</comment>
<comment type="sequence caution" evidence="3">
    <conflict type="erroneous initiation">
        <sequence resource="EMBL-CDS" id="AAO39139"/>
    </conflict>
</comment>
<organism>
    <name type="scientific">Photorhabdus luminescens</name>
    <name type="common">Xenorhabdus luminescens</name>
    <dbReference type="NCBI Taxonomy" id="29488"/>
    <lineage>
        <taxon>Bacteria</taxon>
        <taxon>Pseudomonadati</taxon>
        <taxon>Pseudomonadota</taxon>
        <taxon>Gammaproteobacteria</taxon>
        <taxon>Enterobacterales</taxon>
        <taxon>Morganellaceae</taxon>
        <taxon>Photorhabdus</taxon>
    </lineage>
</organism>
<name>INH_PHOLU</name>
<keyword id="KW-1015">Disulfide bond</keyword>
<keyword id="KW-0481">Metalloenzyme inhibitor</keyword>
<keyword id="KW-0483">Metalloprotease inhibitor</keyword>
<keyword id="KW-0574">Periplasm</keyword>
<keyword id="KW-0646">Protease inhibitor</keyword>
<keyword id="KW-0732">Signal</keyword>
<feature type="signal peptide" evidence="2">
    <location>
        <begin position="1"/>
        <end position="26"/>
    </location>
</feature>
<feature type="chain" id="PRO_0000026716" description="Alkaline proteinase inhibitor">
    <location>
        <begin position="27"/>
        <end position="134"/>
    </location>
</feature>
<feature type="disulfide bond" evidence="1">
    <location>
        <begin position="50"/>
        <end position="73"/>
    </location>
</feature>
<gene>
    <name type="primary">inh</name>
    <name type="synonym">prtI</name>
</gene>
<evidence type="ECO:0000250" key="1"/>
<evidence type="ECO:0000255" key="2"/>
<evidence type="ECO:0000305" key="3"/>
<proteinExistence type="inferred from homology"/>
<dbReference type="EMBL" id="AY230750">
    <property type="protein sequence ID" value="AAO39139.1"/>
    <property type="status" value="ALT_INIT"/>
    <property type="molecule type" value="Genomic_DNA"/>
</dbReference>
<dbReference type="SMR" id="Q84F69"/>
<dbReference type="STRING" id="29488.KS18_15940"/>
<dbReference type="GO" id="GO:0042597">
    <property type="term" value="C:periplasmic space"/>
    <property type="evidence" value="ECO:0007669"/>
    <property type="project" value="UniProtKB-SubCell"/>
</dbReference>
<dbReference type="GO" id="GO:0008191">
    <property type="term" value="F:metalloendopeptidase inhibitor activity"/>
    <property type="evidence" value="ECO:0007669"/>
    <property type="project" value="InterPro"/>
</dbReference>
<dbReference type="Gene3D" id="2.40.128.10">
    <property type="match status" value="1"/>
</dbReference>
<dbReference type="InterPro" id="IPR022815">
    <property type="entry name" value="Inh"/>
</dbReference>
<dbReference type="InterPro" id="IPR021140">
    <property type="entry name" value="Inh/Omp19"/>
</dbReference>
<dbReference type="InterPro" id="IPR016085">
    <property type="entry name" value="Protease_inh_b-brl_dom"/>
</dbReference>
<dbReference type="Pfam" id="PF02974">
    <property type="entry name" value="Inh"/>
    <property type="match status" value="1"/>
</dbReference>
<dbReference type="PRINTS" id="PR01274">
    <property type="entry name" value="MPTASEINHBTR"/>
</dbReference>
<dbReference type="SUPFAM" id="SSF50882">
    <property type="entry name" value="beta-Barrel protease inhibitors"/>
    <property type="match status" value="1"/>
</dbReference>
<accession>Q84F69</accession>
<reference key="1">
    <citation type="submission" date="2003-02" db="EMBL/GenBank/DDBJ databases">
        <authorList>
            <person name="Waterfield N."/>
        </authorList>
    </citation>
    <scope>NUCLEOTIDE SEQUENCE [GENOMIC DNA]</scope>
    <source>
        <strain>W14</strain>
    </source>
</reference>